<feature type="chain" id="PRO_0000424228" description="MICAL-like protein 2">
    <location>
        <begin position="1"/>
        <end position="1014"/>
    </location>
</feature>
<feature type="domain" description="Calponin-homology (CH)" evidence="5">
    <location>
        <begin position="1"/>
        <end position="107"/>
    </location>
</feature>
<feature type="domain" description="LIM zinc-binding" evidence="6">
    <location>
        <begin position="187"/>
        <end position="249"/>
    </location>
</feature>
<feature type="domain" description="bMERB" evidence="7">
    <location>
        <begin position="838"/>
        <end position="985"/>
    </location>
</feature>
<feature type="region of interest" description="Forms an intramolecular interaction with the C-terminal coiled coil domain keeping the protein in a closed conformation" evidence="1">
    <location>
        <begin position="1"/>
        <end position="261"/>
    </location>
</feature>
<feature type="region of interest" description="Disordered" evidence="8">
    <location>
        <begin position="114"/>
        <end position="181"/>
    </location>
</feature>
<feature type="region of interest" description="Mediates targeting to the cell plasma membrane" evidence="1">
    <location>
        <begin position="262"/>
        <end position="810"/>
    </location>
</feature>
<feature type="region of interest" description="Necessary and sufficient for interaction with actinins" evidence="1">
    <location>
        <begin position="262"/>
        <end position="394"/>
    </location>
</feature>
<feature type="region of interest" description="Disordered" evidence="8">
    <location>
        <begin position="311"/>
        <end position="450"/>
    </location>
</feature>
<feature type="region of interest" description="Disordered" evidence="8">
    <location>
        <begin position="609"/>
        <end position="780"/>
    </location>
</feature>
<feature type="region of interest" description="Forms an intramolecular interaction with the N-terminal Calponin-homology and LIM zinc-binding domains-containing region keeping the protein in a closed conformation" evidence="1">
    <location>
        <begin position="811"/>
        <end position="918"/>
    </location>
</feature>
<feature type="region of interest" description="Mediates interaction with RAB13 and is required for transition from the closed to the open conformation" evidence="1">
    <location>
        <begin position="918"/>
        <end position="1014"/>
    </location>
</feature>
<feature type="coiled-coil region" evidence="4">
    <location>
        <begin position="845"/>
        <end position="885"/>
    </location>
</feature>
<feature type="compositionally biased region" description="Polar residues" evidence="8">
    <location>
        <begin position="332"/>
        <end position="355"/>
    </location>
</feature>
<feature type="compositionally biased region" description="Low complexity" evidence="8">
    <location>
        <begin position="356"/>
        <end position="368"/>
    </location>
</feature>
<feature type="compositionally biased region" description="Polar residues" evidence="8">
    <location>
        <begin position="384"/>
        <end position="398"/>
    </location>
</feature>
<feature type="compositionally biased region" description="Low complexity" evidence="8">
    <location>
        <begin position="399"/>
        <end position="419"/>
    </location>
</feature>
<feature type="compositionally biased region" description="Low complexity" evidence="8">
    <location>
        <begin position="438"/>
        <end position="447"/>
    </location>
</feature>
<feature type="compositionally biased region" description="Polar residues" evidence="8">
    <location>
        <begin position="624"/>
        <end position="633"/>
    </location>
</feature>
<feature type="compositionally biased region" description="Polar residues" evidence="8">
    <location>
        <begin position="646"/>
        <end position="656"/>
    </location>
</feature>
<feature type="compositionally biased region" description="Basic and acidic residues" evidence="8">
    <location>
        <begin position="701"/>
        <end position="711"/>
    </location>
</feature>
<feature type="compositionally biased region" description="Basic and acidic residues" evidence="8">
    <location>
        <begin position="720"/>
        <end position="737"/>
    </location>
</feature>
<feature type="compositionally biased region" description="Polar residues" evidence="8">
    <location>
        <begin position="747"/>
        <end position="758"/>
    </location>
</feature>
<feature type="modified residue" description="Phosphoserine" evidence="3">
    <location>
        <position position="110"/>
    </location>
</feature>
<feature type="modified residue" description="Phosphoserine" evidence="3">
    <location>
        <position position="144"/>
    </location>
</feature>
<feature type="modified residue" description="Phosphoserine" evidence="3">
    <location>
        <position position="154"/>
    </location>
</feature>
<feature type="modified residue" description="Phosphoserine" evidence="3">
    <location>
        <position position="250"/>
    </location>
</feature>
<feature type="modified residue" description="Phosphothreonine" evidence="3">
    <location>
        <position position="759"/>
    </location>
</feature>
<feature type="modified residue" description="Phosphoserine" evidence="3">
    <location>
        <position position="773"/>
    </location>
</feature>
<feature type="modified residue" description="Phosphoserine" evidence="2">
    <location>
        <position position="837"/>
    </location>
</feature>
<gene>
    <name type="primary">Micall2</name>
    <name type="synonym">Jrab</name>
</gene>
<reference key="1">
    <citation type="journal article" date="2004" name="Nature">
        <title>Genome sequence of the Brown Norway rat yields insights into mammalian evolution.</title>
        <authorList>
            <person name="Gibbs R.A."/>
            <person name="Weinstock G.M."/>
            <person name="Metzker M.L."/>
            <person name="Muzny D.M."/>
            <person name="Sodergren E.J."/>
            <person name="Scherer S."/>
            <person name="Scott G."/>
            <person name="Steffen D."/>
            <person name="Worley K.C."/>
            <person name="Burch P.E."/>
            <person name="Okwuonu G."/>
            <person name="Hines S."/>
            <person name="Lewis L."/>
            <person name="Deramo C."/>
            <person name="Delgado O."/>
            <person name="Dugan-Rocha S."/>
            <person name="Miner G."/>
            <person name="Morgan M."/>
            <person name="Hawes A."/>
            <person name="Gill R."/>
            <person name="Holt R.A."/>
            <person name="Adams M.D."/>
            <person name="Amanatides P.G."/>
            <person name="Baden-Tillson H."/>
            <person name="Barnstead M."/>
            <person name="Chin S."/>
            <person name="Evans C.A."/>
            <person name="Ferriera S."/>
            <person name="Fosler C."/>
            <person name="Glodek A."/>
            <person name="Gu Z."/>
            <person name="Jennings D."/>
            <person name="Kraft C.L."/>
            <person name="Nguyen T."/>
            <person name="Pfannkoch C.M."/>
            <person name="Sitter C."/>
            <person name="Sutton G.G."/>
            <person name="Venter J.C."/>
            <person name="Woodage T."/>
            <person name="Smith D."/>
            <person name="Lee H.-M."/>
            <person name="Gustafson E."/>
            <person name="Cahill P."/>
            <person name="Kana A."/>
            <person name="Doucette-Stamm L."/>
            <person name="Weinstock K."/>
            <person name="Fechtel K."/>
            <person name="Weiss R.B."/>
            <person name="Dunn D.M."/>
            <person name="Green E.D."/>
            <person name="Blakesley R.W."/>
            <person name="Bouffard G.G."/>
            <person name="De Jong P.J."/>
            <person name="Osoegawa K."/>
            <person name="Zhu B."/>
            <person name="Marra M."/>
            <person name="Schein J."/>
            <person name="Bosdet I."/>
            <person name="Fjell C."/>
            <person name="Jones S."/>
            <person name="Krzywinski M."/>
            <person name="Mathewson C."/>
            <person name="Siddiqui A."/>
            <person name="Wye N."/>
            <person name="McPherson J."/>
            <person name="Zhao S."/>
            <person name="Fraser C.M."/>
            <person name="Shetty J."/>
            <person name="Shatsman S."/>
            <person name="Geer K."/>
            <person name="Chen Y."/>
            <person name="Abramzon S."/>
            <person name="Nierman W.C."/>
            <person name="Havlak P.H."/>
            <person name="Chen R."/>
            <person name="Durbin K.J."/>
            <person name="Egan A."/>
            <person name="Ren Y."/>
            <person name="Song X.-Z."/>
            <person name="Li B."/>
            <person name="Liu Y."/>
            <person name="Qin X."/>
            <person name="Cawley S."/>
            <person name="Cooney A.J."/>
            <person name="D'Souza L.M."/>
            <person name="Martin K."/>
            <person name="Wu J.Q."/>
            <person name="Gonzalez-Garay M.L."/>
            <person name="Jackson A.R."/>
            <person name="Kalafus K.J."/>
            <person name="McLeod M.P."/>
            <person name="Milosavljevic A."/>
            <person name="Virk D."/>
            <person name="Volkov A."/>
            <person name="Wheeler D.A."/>
            <person name="Zhang Z."/>
            <person name="Bailey J.A."/>
            <person name="Eichler E.E."/>
            <person name="Tuzun E."/>
            <person name="Birney E."/>
            <person name="Mongin E."/>
            <person name="Ureta-Vidal A."/>
            <person name="Woodwark C."/>
            <person name="Zdobnov E."/>
            <person name="Bork P."/>
            <person name="Suyama M."/>
            <person name="Torrents D."/>
            <person name="Alexandersson M."/>
            <person name="Trask B.J."/>
            <person name="Young J.M."/>
            <person name="Huang H."/>
            <person name="Wang H."/>
            <person name="Xing H."/>
            <person name="Daniels S."/>
            <person name="Gietzen D."/>
            <person name="Schmidt J."/>
            <person name="Stevens K."/>
            <person name="Vitt U."/>
            <person name="Wingrove J."/>
            <person name="Camara F."/>
            <person name="Mar Alba M."/>
            <person name="Abril J.F."/>
            <person name="Guigo R."/>
            <person name="Smit A."/>
            <person name="Dubchak I."/>
            <person name="Rubin E.M."/>
            <person name="Couronne O."/>
            <person name="Poliakov A."/>
            <person name="Huebner N."/>
            <person name="Ganten D."/>
            <person name="Goesele C."/>
            <person name="Hummel O."/>
            <person name="Kreitler T."/>
            <person name="Lee Y.-A."/>
            <person name="Monti J."/>
            <person name="Schulz H."/>
            <person name="Zimdahl H."/>
            <person name="Himmelbauer H."/>
            <person name="Lehrach H."/>
            <person name="Jacob H.J."/>
            <person name="Bromberg S."/>
            <person name="Gullings-Handley J."/>
            <person name="Jensen-Seaman M.I."/>
            <person name="Kwitek A.E."/>
            <person name="Lazar J."/>
            <person name="Pasko D."/>
            <person name="Tonellato P.J."/>
            <person name="Twigger S."/>
            <person name="Ponting C.P."/>
            <person name="Duarte J.M."/>
            <person name="Rice S."/>
            <person name="Goodstadt L."/>
            <person name="Beatson S.A."/>
            <person name="Emes R.D."/>
            <person name="Winter E.E."/>
            <person name="Webber C."/>
            <person name="Brandt P."/>
            <person name="Nyakatura G."/>
            <person name="Adetobi M."/>
            <person name="Chiaromonte F."/>
            <person name="Elnitski L."/>
            <person name="Eswara P."/>
            <person name="Hardison R.C."/>
            <person name="Hou M."/>
            <person name="Kolbe D."/>
            <person name="Makova K."/>
            <person name="Miller W."/>
            <person name="Nekrutenko A."/>
            <person name="Riemer C."/>
            <person name="Schwartz S."/>
            <person name="Taylor J."/>
            <person name="Yang S."/>
            <person name="Zhang Y."/>
            <person name="Lindpaintner K."/>
            <person name="Andrews T.D."/>
            <person name="Caccamo M."/>
            <person name="Clamp M."/>
            <person name="Clarke L."/>
            <person name="Curwen V."/>
            <person name="Durbin R.M."/>
            <person name="Eyras E."/>
            <person name="Searle S.M."/>
            <person name="Cooper G.M."/>
            <person name="Batzoglou S."/>
            <person name="Brudno M."/>
            <person name="Sidow A."/>
            <person name="Stone E.A."/>
            <person name="Payseur B.A."/>
            <person name="Bourque G."/>
            <person name="Lopez-Otin C."/>
            <person name="Puente X.S."/>
            <person name="Chakrabarti K."/>
            <person name="Chatterji S."/>
            <person name="Dewey C."/>
            <person name="Pachter L."/>
            <person name="Bray N."/>
            <person name="Yap V.B."/>
            <person name="Caspi A."/>
            <person name="Tesler G."/>
            <person name="Pevzner P.A."/>
            <person name="Haussler D."/>
            <person name="Roskin K.M."/>
            <person name="Baertsch R."/>
            <person name="Clawson H."/>
            <person name="Furey T.S."/>
            <person name="Hinrichs A.S."/>
            <person name="Karolchik D."/>
            <person name="Kent W.J."/>
            <person name="Rosenbloom K.R."/>
            <person name="Trumbower H."/>
            <person name="Weirauch M."/>
            <person name="Cooper D.N."/>
            <person name="Stenson P.D."/>
            <person name="Ma B."/>
            <person name="Brent M."/>
            <person name="Arumugam M."/>
            <person name="Shteynberg D."/>
            <person name="Copley R.R."/>
            <person name="Taylor M.S."/>
            <person name="Riethman H."/>
            <person name="Mudunuri U."/>
            <person name="Peterson J."/>
            <person name="Guyer M."/>
            <person name="Felsenfeld A."/>
            <person name="Old S."/>
            <person name="Mockrin S."/>
            <person name="Collins F.S."/>
        </authorList>
    </citation>
    <scope>NUCLEOTIDE SEQUENCE [LARGE SCALE GENOMIC DNA]</scope>
    <source>
        <strain>Brown Norway</strain>
    </source>
</reference>
<reference key="2">
    <citation type="journal article" date="2010" name="Mol. Cell. Biol.">
        <title>Rab13 regulates neurite outgrowth in PC12 cells through its effector protein, JRAB/MICAL-L2.</title>
        <authorList>
            <person name="Sakane A."/>
            <person name="Honda K."/>
            <person name="Sasaki T."/>
        </authorList>
    </citation>
    <scope>FUNCTION IN NEURITE OUTGROWTH</scope>
    <scope>SUBCELLULAR LOCATION</scope>
</reference>
<keyword id="KW-0965">Cell junction</keyword>
<keyword id="KW-1003">Cell membrane</keyword>
<keyword id="KW-0966">Cell projection</keyword>
<keyword id="KW-0175">Coiled coil</keyword>
<keyword id="KW-0963">Cytoplasm</keyword>
<keyword id="KW-0206">Cytoskeleton</keyword>
<keyword id="KW-0967">Endosome</keyword>
<keyword id="KW-0440">LIM domain</keyword>
<keyword id="KW-0472">Membrane</keyword>
<keyword id="KW-0479">Metal-binding</keyword>
<keyword id="KW-0597">Phosphoprotein</keyword>
<keyword id="KW-1185">Reference proteome</keyword>
<keyword id="KW-0796">Tight junction</keyword>
<keyword id="KW-0862">Zinc</keyword>
<accession>D3ZEN0</accession>
<sequence>MAAIKALQEWCRQQCEGYRDVSITNMTTSFRDGLAFCAILHRHRPDLINFNALRKENIYENNKLAFQVAEEQLGIPALLDAEDMVALKIPDRLSILTYVSQYYNYFHGRSPIGGMAGMKRPSSDSTEELSGKKKVPSQPAKLSSPVPTQRLPLSPARTNPVVQRNEGVSERPSPKAAPGTVGSSVSSICGVCGKHVHLVQRHLADGRLYHRSCFRCKQCSSTLHSGAYRATGEPGVFVCTHHSSEAVSVSPKLSNLASRQPGGGIADTRPIGVSQKVLETNGEATPLRARTAAWEHAGGNRAAKGFVQTELTPPATSRVHVGSPAGPRLPMSTVTTTSANSKATTHVTNSSPVGWSSSAQSSTGTSGSRPVVSPSALGAHLSVPQGQAASKGVKTQLNSSTDSSSTAPTPAWTSSSSRTQQAREKFFHNLSPAPAPAPASSSSSHASRVPTVVTAPSGKVSPLVNTSTSKVPSATVVTVPTSKASTVVTAPTSKAPTVVTVPISKAPTVVTAPTSKVSTVVTVPTSKASTVVTAPTSKASTVVTVPTGRGHVVVNTSASKVSGVVDNPAQESSREQALSVLRKALPGLTRAGSQAPSRSSPATSSVLITLPKNEVPPKVPSAKLSHSTTQAFSPTPKMEPTAPLSVGSTSWTSVSLQAGKKSPGISPGIGKTSAVSRPQAEVKGTSGPGPTSQEGQEEGPEGWRARLKPVDKSIPSARALEQKEPVLAEPRAGDTPRKASSSSDSSIHITLTPIQQKRTPCLADSGSSLAAPSPPSRRKKLVVPPTLDVSADWLQPELKKQDDQTRSCKEKTATWGTRESSAILDNDLVSPDEAVTSPVRLHPNYISQEELQRQLQDIERQLDALELRGVELEKRLRAAEGDASEDGLMVDWFRLIHEKQLLLRRESELMYKSKDQCLEERQLDLQGELRRLMEKPEGLKSPQDRKREQELLNQYVNTVNDRSDIVDNLDEDRLREQEEDQMLESMIQNLGLQRKKSKSFLSKIWSSKSKSGQT</sequence>
<organism>
    <name type="scientific">Rattus norvegicus</name>
    <name type="common">Rat</name>
    <dbReference type="NCBI Taxonomy" id="10116"/>
    <lineage>
        <taxon>Eukaryota</taxon>
        <taxon>Metazoa</taxon>
        <taxon>Chordata</taxon>
        <taxon>Craniata</taxon>
        <taxon>Vertebrata</taxon>
        <taxon>Euteleostomi</taxon>
        <taxon>Mammalia</taxon>
        <taxon>Eutheria</taxon>
        <taxon>Euarchontoglires</taxon>
        <taxon>Glires</taxon>
        <taxon>Rodentia</taxon>
        <taxon>Myomorpha</taxon>
        <taxon>Muroidea</taxon>
        <taxon>Muridae</taxon>
        <taxon>Murinae</taxon>
        <taxon>Rattus</taxon>
    </lineage>
</organism>
<name>MILK2_RAT</name>
<evidence type="ECO:0000250" key="1"/>
<evidence type="ECO:0000250" key="2">
    <source>
        <dbReference type="UniProtKB" id="Q3TN34"/>
    </source>
</evidence>
<evidence type="ECO:0000250" key="3">
    <source>
        <dbReference type="UniProtKB" id="Q8IY33"/>
    </source>
</evidence>
<evidence type="ECO:0000255" key="4"/>
<evidence type="ECO:0000255" key="5">
    <source>
        <dbReference type="PROSITE-ProRule" id="PRU00044"/>
    </source>
</evidence>
<evidence type="ECO:0000255" key="6">
    <source>
        <dbReference type="PROSITE-ProRule" id="PRU00125"/>
    </source>
</evidence>
<evidence type="ECO:0000255" key="7">
    <source>
        <dbReference type="PROSITE-ProRule" id="PRU01195"/>
    </source>
</evidence>
<evidence type="ECO:0000256" key="8">
    <source>
        <dbReference type="SAM" id="MobiDB-lite"/>
    </source>
</evidence>
<evidence type="ECO:0000269" key="9">
    <source>
    </source>
</evidence>
<proteinExistence type="evidence at protein level"/>
<protein>
    <recommendedName>
        <fullName>MICAL-like protein 2</fullName>
    </recommendedName>
    <alternativeName>
        <fullName>Junctional Rab13-binding protein</fullName>
    </alternativeName>
    <alternativeName>
        <fullName>Molecule interacting with CasL-like 2</fullName>
        <shortName>MICAL-L2</shortName>
    </alternativeName>
</protein>
<dbReference type="EMBL" id="AABR06070698">
    <property type="status" value="NOT_ANNOTATED_CDS"/>
    <property type="molecule type" value="Genomic_DNA"/>
</dbReference>
<dbReference type="SMR" id="D3ZEN0"/>
<dbReference type="FunCoup" id="D3ZEN0">
    <property type="interactions" value="814"/>
</dbReference>
<dbReference type="STRING" id="10116.ENSRNOP00000031199"/>
<dbReference type="GlyGen" id="D3ZEN0">
    <property type="glycosylation" value="2 sites"/>
</dbReference>
<dbReference type="iPTMnet" id="D3ZEN0"/>
<dbReference type="PhosphoSitePlus" id="D3ZEN0"/>
<dbReference type="PaxDb" id="10116-ENSRNOP00000031199"/>
<dbReference type="PeptideAtlas" id="D3ZEN0"/>
<dbReference type="UCSC" id="RGD:1307875">
    <property type="organism name" value="rat"/>
</dbReference>
<dbReference type="AGR" id="RGD:1307875"/>
<dbReference type="RGD" id="1307875">
    <property type="gene designation" value="Micall2"/>
</dbReference>
<dbReference type="VEuPathDB" id="HostDB:ENSRNOG00000022533"/>
<dbReference type="eggNOG" id="ENOG502QVVF">
    <property type="taxonomic scope" value="Eukaryota"/>
</dbReference>
<dbReference type="InParanoid" id="D3ZEN0"/>
<dbReference type="TreeFam" id="TF328311"/>
<dbReference type="PRO" id="PR:D3ZEN0"/>
<dbReference type="Proteomes" id="UP000002494">
    <property type="component" value="Chromosome 12"/>
</dbReference>
<dbReference type="Bgee" id="ENSRNOG00000022533">
    <property type="expression patterns" value="Expressed in duodenum and 19 other cell types or tissues"/>
</dbReference>
<dbReference type="ExpressionAtlas" id="D3ZEN0">
    <property type="expression patterns" value="baseline and differential"/>
</dbReference>
<dbReference type="GO" id="GO:0032432">
    <property type="term" value="C:actin filament bundle"/>
    <property type="evidence" value="ECO:0000266"/>
    <property type="project" value="RGD"/>
</dbReference>
<dbReference type="GO" id="GO:0005923">
    <property type="term" value="C:bicellular tight junction"/>
    <property type="evidence" value="ECO:0000250"/>
    <property type="project" value="UniProtKB"/>
</dbReference>
<dbReference type="GO" id="GO:0005911">
    <property type="term" value="C:cell-cell junction"/>
    <property type="evidence" value="ECO:0000250"/>
    <property type="project" value="UniProtKB"/>
</dbReference>
<dbReference type="GO" id="GO:0043005">
    <property type="term" value="C:neuron projection"/>
    <property type="evidence" value="ECO:0000314"/>
    <property type="project" value="UniProtKB"/>
</dbReference>
<dbReference type="GO" id="GO:0005886">
    <property type="term" value="C:plasma membrane"/>
    <property type="evidence" value="ECO:0000250"/>
    <property type="project" value="UniProtKB"/>
</dbReference>
<dbReference type="GO" id="GO:0055037">
    <property type="term" value="C:recycling endosome"/>
    <property type="evidence" value="ECO:0000250"/>
    <property type="project" value="UniProtKB"/>
</dbReference>
<dbReference type="GO" id="GO:0001725">
    <property type="term" value="C:stress fiber"/>
    <property type="evidence" value="ECO:0000266"/>
    <property type="project" value="RGD"/>
</dbReference>
<dbReference type="GO" id="GO:0051015">
    <property type="term" value="F:actin filament binding"/>
    <property type="evidence" value="ECO:0000250"/>
    <property type="project" value="UniProtKB"/>
</dbReference>
<dbReference type="GO" id="GO:0042805">
    <property type="term" value="F:actinin binding"/>
    <property type="evidence" value="ECO:0000266"/>
    <property type="project" value="RGD"/>
</dbReference>
<dbReference type="GO" id="GO:0031005">
    <property type="term" value="F:filamin binding"/>
    <property type="evidence" value="ECO:0000250"/>
    <property type="project" value="UniProtKB"/>
</dbReference>
<dbReference type="GO" id="GO:0046872">
    <property type="term" value="F:metal ion binding"/>
    <property type="evidence" value="ECO:0007669"/>
    <property type="project" value="UniProtKB-KW"/>
</dbReference>
<dbReference type="GO" id="GO:0031267">
    <property type="term" value="F:small GTPase binding"/>
    <property type="evidence" value="ECO:0000266"/>
    <property type="project" value="RGD"/>
</dbReference>
<dbReference type="GO" id="GO:0030036">
    <property type="term" value="P:actin cytoskeleton organization"/>
    <property type="evidence" value="ECO:0000250"/>
    <property type="project" value="UniProtKB"/>
</dbReference>
<dbReference type="GO" id="GO:0030041">
    <property type="term" value="P:actin filament polymerization"/>
    <property type="evidence" value="ECO:0000315"/>
    <property type="project" value="UniProtKB"/>
</dbReference>
<dbReference type="GO" id="GO:0070830">
    <property type="term" value="P:bicellular tight junction assembly"/>
    <property type="evidence" value="ECO:0000250"/>
    <property type="project" value="UniProtKB"/>
</dbReference>
<dbReference type="GO" id="GO:0032456">
    <property type="term" value="P:endocytic recycling"/>
    <property type="evidence" value="ECO:0000250"/>
    <property type="project" value="UniProtKB"/>
</dbReference>
<dbReference type="GO" id="GO:0031175">
    <property type="term" value="P:neuron projection development"/>
    <property type="evidence" value="ECO:0000315"/>
    <property type="project" value="UniProtKB"/>
</dbReference>
<dbReference type="GO" id="GO:0034446">
    <property type="term" value="P:substrate adhesion-dependent cell spreading"/>
    <property type="evidence" value="ECO:0000250"/>
    <property type="project" value="UniProtKB"/>
</dbReference>
<dbReference type="CDD" id="cd21253">
    <property type="entry name" value="CH_MICALL2"/>
    <property type="match status" value="1"/>
</dbReference>
<dbReference type="CDD" id="cd09444">
    <property type="entry name" value="LIM_Mical_like_1"/>
    <property type="match status" value="1"/>
</dbReference>
<dbReference type="FunFam" id="1.10.418.10:FF:000055">
    <property type="entry name" value="MICAL-like protein 2"/>
    <property type="match status" value="1"/>
</dbReference>
<dbReference type="Gene3D" id="1.10.418.10">
    <property type="entry name" value="Calponin-like domain"/>
    <property type="match status" value="1"/>
</dbReference>
<dbReference type="Gene3D" id="2.10.110.10">
    <property type="entry name" value="Cysteine Rich Protein"/>
    <property type="match status" value="1"/>
</dbReference>
<dbReference type="InterPro" id="IPR022735">
    <property type="entry name" value="bMERB_dom"/>
</dbReference>
<dbReference type="InterPro" id="IPR001715">
    <property type="entry name" value="CH_dom"/>
</dbReference>
<dbReference type="InterPro" id="IPR036872">
    <property type="entry name" value="CH_dom_sf"/>
</dbReference>
<dbReference type="InterPro" id="IPR050540">
    <property type="entry name" value="F-actin_Monoox_Mical"/>
</dbReference>
<dbReference type="InterPro" id="IPR001781">
    <property type="entry name" value="Znf_LIM"/>
</dbReference>
<dbReference type="PANTHER" id="PTHR23167">
    <property type="entry name" value="CALPONIN HOMOLOGY DOMAIN-CONTAINING PROTEIN DDB_G0272472-RELATED"/>
    <property type="match status" value="1"/>
</dbReference>
<dbReference type="PANTHER" id="PTHR23167:SF87">
    <property type="entry name" value="MICAL-LIKE PROTEIN 2"/>
    <property type="match status" value="1"/>
</dbReference>
<dbReference type="Pfam" id="PF12130">
    <property type="entry name" value="bMERB_dom"/>
    <property type="match status" value="1"/>
</dbReference>
<dbReference type="Pfam" id="PF00307">
    <property type="entry name" value="CH"/>
    <property type="match status" value="1"/>
</dbReference>
<dbReference type="Pfam" id="PF00412">
    <property type="entry name" value="LIM"/>
    <property type="match status" value="1"/>
</dbReference>
<dbReference type="SMART" id="SM00033">
    <property type="entry name" value="CH"/>
    <property type="match status" value="1"/>
</dbReference>
<dbReference type="SMART" id="SM01203">
    <property type="entry name" value="DUF3585"/>
    <property type="match status" value="1"/>
</dbReference>
<dbReference type="SMART" id="SM00132">
    <property type="entry name" value="LIM"/>
    <property type="match status" value="1"/>
</dbReference>
<dbReference type="SUPFAM" id="SSF47576">
    <property type="entry name" value="Calponin-homology domain, CH-domain"/>
    <property type="match status" value="1"/>
</dbReference>
<dbReference type="SUPFAM" id="SSF57716">
    <property type="entry name" value="Glucocorticoid receptor-like (DNA-binding domain)"/>
    <property type="match status" value="2"/>
</dbReference>
<dbReference type="PROSITE" id="PS51848">
    <property type="entry name" value="BMERB"/>
    <property type="match status" value="1"/>
</dbReference>
<dbReference type="PROSITE" id="PS50021">
    <property type="entry name" value="CH"/>
    <property type="match status" value="1"/>
</dbReference>
<dbReference type="PROSITE" id="PS00478">
    <property type="entry name" value="LIM_DOMAIN_1"/>
    <property type="match status" value="1"/>
</dbReference>
<dbReference type="PROSITE" id="PS50023">
    <property type="entry name" value="LIM_DOMAIN_2"/>
    <property type="match status" value="1"/>
</dbReference>
<comment type="function">
    <text evidence="2 9">Effector of small Rab GTPases which is involved in junctional complexes assembly through the regulation of cell adhesion molecules transport to the plasma membrane and actin cytoskeleton reorganization. Regulates the endocytic recycling of occludins, claudins and E-cadherin to the plasma membrane and may thereby regulate the establishment of tight junctions and adherens junctions. In parallel, may regulate actin cytoskeleton reorganization directly through interaction with F-actin or indirectly through actinins and filamins. Most probably involved in the processes of epithelial cell differentiation, cell spreading and neurite outgrowth. Undergoes liquid-liquid phase separation to form tubular recycling endosomes. Plays 2 sequential roles in the biogenesis of tubular recycling endosomes: first organizes phase separation and then the closed form formed by interaction with RAB8A promotes endosomal tubulation (By similarity).</text>
</comment>
<comment type="subunit">
    <text evidence="1">Interacts with RAB13 (GTP-bound form); competes with RAB8A and is involved in tight junctions assembly. Interacts with RAB8A; competes with RAB13 and is involved in E-cadherin endocytic recycling. Interacts with RAB8B. Interacts (preferentially in opened conformation) with ACTN1 and ACTN4; stimulated by RAB13 activation. Interacts (via calponin-homology (CH) domain) with the filamins FLNA, FLNB and FLNC (via actin-binding domain) (By similarity).</text>
</comment>
<comment type="subcellular location">
    <subcellularLocation>
        <location evidence="2">Cell membrane</location>
        <topology evidence="2">Peripheral membrane protein</topology>
    </subcellularLocation>
    <subcellularLocation>
        <location evidence="2">Cell junction</location>
        <location evidence="2">Tight junction</location>
    </subcellularLocation>
    <subcellularLocation>
        <location evidence="2">Recycling endosome</location>
    </subcellularLocation>
    <subcellularLocation>
        <location evidence="9">Cell projection</location>
        <location evidence="9">Neuron projection</location>
    </subcellularLocation>
    <subcellularLocation>
        <location evidence="2">Cytoplasm</location>
        <location evidence="2">Cytoskeleton</location>
    </subcellularLocation>
</comment>
<comment type="domain">
    <text evidence="2">Exists in a closed and an open conformation due to interaction of the C-terminal coiled-coil domain with an N-terminal region including the calponin-homology (CH) and the LIM zinc-binding domain. The conformational change is regulated by RAB13 and RAB8A. Adopts its closed form upon interaction with RAB8A and interaction with RAB13 causes conformational change from closed to open.</text>
</comment>